<accession>Q0SZQ1</accession>
<keyword id="KW-0004">4Fe-4S</keyword>
<keyword id="KW-0408">Iron</keyword>
<keyword id="KW-0411">Iron-sulfur</keyword>
<keyword id="KW-0479">Metal-binding</keyword>
<proteinExistence type="inferred from homology"/>
<name>NFUA_SHIF8</name>
<reference key="1">
    <citation type="journal article" date="2006" name="BMC Genomics">
        <title>Complete genome sequence of Shigella flexneri 5b and comparison with Shigella flexneri 2a.</title>
        <authorList>
            <person name="Nie H."/>
            <person name="Yang F."/>
            <person name="Zhang X."/>
            <person name="Yang J."/>
            <person name="Chen L."/>
            <person name="Wang J."/>
            <person name="Xiong Z."/>
            <person name="Peng J."/>
            <person name="Sun L."/>
            <person name="Dong J."/>
            <person name="Xue Y."/>
            <person name="Xu X."/>
            <person name="Chen S."/>
            <person name="Yao Z."/>
            <person name="Shen Y."/>
            <person name="Jin Q."/>
        </authorList>
    </citation>
    <scope>NUCLEOTIDE SEQUENCE [LARGE SCALE GENOMIC DNA]</scope>
    <source>
        <strain>8401</strain>
    </source>
</reference>
<organism>
    <name type="scientific">Shigella flexneri serotype 5b (strain 8401)</name>
    <dbReference type="NCBI Taxonomy" id="373384"/>
    <lineage>
        <taxon>Bacteria</taxon>
        <taxon>Pseudomonadati</taxon>
        <taxon>Pseudomonadota</taxon>
        <taxon>Gammaproteobacteria</taxon>
        <taxon>Enterobacterales</taxon>
        <taxon>Enterobacteriaceae</taxon>
        <taxon>Shigella</taxon>
    </lineage>
</organism>
<comment type="function">
    <text evidence="1">Involved in iron-sulfur cluster biogenesis. Binds a 4Fe-4S cluster, can transfer this cluster to apoproteins, and thereby intervenes in the maturation of Fe/S proteins. Could also act as a scaffold/chaperone for damaged Fe/S proteins.</text>
</comment>
<comment type="cofactor">
    <cofactor evidence="1">
        <name>[4Fe-4S] cluster</name>
        <dbReference type="ChEBI" id="CHEBI:49883"/>
    </cofactor>
    <text evidence="1">Binds 1 [4Fe-4S] cluster per subunit. The cluster is presumably bound at the interface of two monomers.</text>
</comment>
<comment type="subunit">
    <text evidence="1">Homodimer.</text>
</comment>
<comment type="similarity">
    <text evidence="1">Belongs to the NfuA family.</text>
</comment>
<protein>
    <recommendedName>
        <fullName evidence="1">Fe/S biogenesis protein NfuA</fullName>
    </recommendedName>
</protein>
<sequence length="191" mass="20998">MIRISDAAQAHFAKLLANQEEGTQIRVFVINPGTPNAECGVSYCPPDAVEATDTALKFDLLTAYVDELSAPYLEDAEIDFVTDQLGSQLTLKAPNAKMRKVADDAPLMERVEYMLQSQINPQLAGHGGRVSLMEITEDGYAILQFGGGCNGCSMVDVTLKEGIEKQLLNEFPELKGVRDLTEHQRGEHSYY</sequence>
<dbReference type="EMBL" id="CP000266">
    <property type="protein sequence ID" value="ABF05464.1"/>
    <property type="molecule type" value="Genomic_DNA"/>
</dbReference>
<dbReference type="RefSeq" id="WP_000619389.1">
    <property type="nucleotide sequence ID" value="NC_008258.1"/>
</dbReference>
<dbReference type="SMR" id="Q0SZQ1"/>
<dbReference type="GeneID" id="93778582"/>
<dbReference type="KEGG" id="sfv:SFV_3422"/>
<dbReference type="HOGENOM" id="CLU_094569_0_0_6"/>
<dbReference type="Proteomes" id="UP000000659">
    <property type="component" value="Chromosome"/>
</dbReference>
<dbReference type="GO" id="GO:0051539">
    <property type="term" value="F:4 iron, 4 sulfur cluster binding"/>
    <property type="evidence" value="ECO:0007669"/>
    <property type="project" value="UniProtKB-UniRule"/>
</dbReference>
<dbReference type="GO" id="GO:0005506">
    <property type="term" value="F:iron ion binding"/>
    <property type="evidence" value="ECO:0007669"/>
    <property type="project" value="InterPro"/>
</dbReference>
<dbReference type="GO" id="GO:0016226">
    <property type="term" value="P:iron-sulfur cluster assembly"/>
    <property type="evidence" value="ECO:0007669"/>
    <property type="project" value="UniProtKB-UniRule"/>
</dbReference>
<dbReference type="GO" id="GO:0051604">
    <property type="term" value="P:protein maturation"/>
    <property type="evidence" value="ECO:0007669"/>
    <property type="project" value="UniProtKB-UniRule"/>
</dbReference>
<dbReference type="FunFam" id="2.60.300.12:FF:000004">
    <property type="entry name" value="Fe/S biogenesis protein NfuA"/>
    <property type="match status" value="1"/>
</dbReference>
<dbReference type="FunFam" id="3.30.300.130:FF:000002">
    <property type="entry name" value="Fe/S biogenesis protein NfuA"/>
    <property type="match status" value="1"/>
</dbReference>
<dbReference type="Gene3D" id="3.30.300.130">
    <property type="entry name" value="Fe-S cluster assembly (FSCA)"/>
    <property type="match status" value="1"/>
</dbReference>
<dbReference type="Gene3D" id="2.60.300.12">
    <property type="entry name" value="HesB-like domain"/>
    <property type="match status" value="1"/>
</dbReference>
<dbReference type="HAMAP" id="MF_01637">
    <property type="entry name" value="Fe_S_biogen_NfuA"/>
    <property type="match status" value="1"/>
</dbReference>
<dbReference type="InterPro" id="IPR017726">
    <property type="entry name" value="Fe/S_biogenesis_protein_NfuA"/>
</dbReference>
<dbReference type="InterPro" id="IPR000361">
    <property type="entry name" value="FeS_biogenesis"/>
</dbReference>
<dbReference type="InterPro" id="IPR034904">
    <property type="entry name" value="FSCA_dom_sf"/>
</dbReference>
<dbReference type="InterPro" id="IPR035903">
    <property type="entry name" value="HesB-like_dom_sf"/>
</dbReference>
<dbReference type="InterPro" id="IPR001075">
    <property type="entry name" value="NIF_FeS_clus_asmbl_NifU_C"/>
</dbReference>
<dbReference type="NCBIfam" id="NF008392">
    <property type="entry name" value="PRK11190.1"/>
    <property type="match status" value="1"/>
</dbReference>
<dbReference type="NCBIfam" id="TIGR03341">
    <property type="entry name" value="YhgI_GntY"/>
    <property type="match status" value="1"/>
</dbReference>
<dbReference type="PANTHER" id="PTHR11178:SF51">
    <property type="entry name" value="FE_S BIOGENESIS PROTEIN NFUA"/>
    <property type="match status" value="1"/>
</dbReference>
<dbReference type="PANTHER" id="PTHR11178">
    <property type="entry name" value="IRON-SULFUR CLUSTER SCAFFOLD PROTEIN NFU-RELATED"/>
    <property type="match status" value="1"/>
</dbReference>
<dbReference type="Pfam" id="PF01521">
    <property type="entry name" value="Fe-S_biosyn"/>
    <property type="match status" value="1"/>
</dbReference>
<dbReference type="Pfam" id="PF01106">
    <property type="entry name" value="NifU"/>
    <property type="match status" value="1"/>
</dbReference>
<dbReference type="SUPFAM" id="SSF117916">
    <property type="entry name" value="Fe-S cluster assembly (FSCA) domain-like"/>
    <property type="match status" value="1"/>
</dbReference>
<dbReference type="SUPFAM" id="SSF89360">
    <property type="entry name" value="HesB-like domain"/>
    <property type="match status" value="1"/>
</dbReference>
<feature type="chain" id="PRO_0000292095" description="Fe/S biogenesis protein NfuA">
    <location>
        <begin position="1"/>
        <end position="191"/>
    </location>
</feature>
<feature type="binding site" evidence="1">
    <location>
        <position position="149"/>
    </location>
    <ligand>
        <name>[4Fe-4S] cluster</name>
        <dbReference type="ChEBI" id="CHEBI:49883"/>
    </ligand>
</feature>
<feature type="binding site" evidence="1">
    <location>
        <position position="152"/>
    </location>
    <ligand>
        <name>[4Fe-4S] cluster</name>
        <dbReference type="ChEBI" id="CHEBI:49883"/>
    </ligand>
</feature>
<gene>
    <name evidence="1" type="primary">nfuA</name>
    <name type="ordered locus">SFV_3422</name>
</gene>
<evidence type="ECO:0000255" key="1">
    <source>
        <dbReference type="HAMAP-Rule" id="MF_01637"/>
    </source>
</evidence>